<proteinExistence type="inferred from homology"/>
<dbReference type="EC" id="3.5.1.16" evidence="1"/>
<dbReference type="EMBL" id="CP001158">
    <property type="protein sequence ID" value="ACL29874.1"/>
    <property type="molecule type" value="Genomic_DNA"/>
</dbReference>
<dbReference type="RefSeq" id="WP_012619408.1">
    <property type="nucleotide sequence ID" value="NC_011834.1"/>
</dbReference>
<dbReference type="SMR" id="B8D6V9"/>
<dbReference type="KEGG" id="bau:BUAPTUC7_047"/>
<dbReference type="HOGENOM" id="CLU_021802_2_4_6"/>
<dbReference type="UniPathway" id="UPA00068">
    <property type="reaction ID" value="UER00110"/>
</dbReference>
<dbReference type="GO" id="GO:0005737">
    <property type="term" value="C:cytoplasm"/>
    <property type="evidence" value="ECO:0007669"/>
    <property type="project" value="UniProtKB-SubCell"/>
</dbReference>
<dbReference type="GO" id="GO:0008777">
    <property type="term" value="F:acetylornithine deacetylase activity"/>
    <property type="evidence" value="ECO:0007669"/>
    <property type="project" value="UniProtKB-UniRule"/>
</dbReference>
<dbReference type="GO" id="GO:0008270">
    <property type="term" value="F:zinc ion binding"/>
    <property type="evidence" value="ECO:0007669"/>
    <property type="project" value="UniProtKB-UniRule"/>
</dbReference>
<dbReference type="GO" id="GO:0006526">
    <property type="term" value="P:L-arginine biosynthetic process"/>
    <property type="evidence" value="ECO:0007669"/>
    <property type="project" value="UniProtKB-UniRule"/>
</dbReference>
<dbReference type="CDD" id="cd03894">
    <property type="entry name" value="M20_ArgE"/>
    <property type="match status" value="1"/>
</dbReference>
<dbReference type="FunFam" id="3.30.70.360:FF:000003">
    <property type="entry name" value="Acetylornithine deacetylase"/>
    <property type="match status" value="1"/>
</dbReference>
<dbReference type="Gene3D" id="3.30.70.360">
    <property type="match status" value="1"/>
</dbReference>
<dbReference type="Gene3D" id="3.40.630.10">
    <property type="entry name" value="Zn peptidases"/>
    <property type="match status" value="1"/>
</dbReference>
<dbReference type="HAMAP" id="MF_01108">
    <property type="entry name" value="ArgE"/>
    <property type="match status" value="1"/>
</dbReference>
<dbReference type="InterPro" id="IPR010169">
    <property type="entry name" value="AcOrn-deacetyl"/>
</dbReference>
<dbReference type="InterPro" id="IPR001261">
    <property type="entry name" value="ArgE/DapE_CS"/>
</dbReference>
<dbReference type="InterPro" id="IPR036264">
    <property type="entry name" value="Bact_exopeptidase_dim_dom"/>
</dbReference>
<dbReference type="InterPro" id="IPR002933">
    <property type="entry name" value="Peptidase_M20"/>
</dbReference>
<dbReference type="InterPro" id="IPR011650">
    <property type="entry name" value="Peptidase_M20_dimer"/>
</dbReference>
<dbReference type="InterPro" id="IPR050072">
    <property type="entry name" value="Peptidase_M20A"/>
</dbReference>
<dbReference type="NCBIfam" id="TIGR01892">
    <property type="entry name" value="AcOrn-deacetyl"/>
    <property type="match status" value="1"/>
</dbReference>
<dbReference type="NCBIfam" id="NF003474">
    <property type="entry name" value="PRK05111.1"/>
    <property type="match status" value="1"/>
</dbReference>
<dbReference type="PANTHER" id="PTHR43808">
    <property type="entry name" value="ACETYLORNITHINE DEACETYLASE"/>
    <property type="match status" value="1"/>
</dbReference>
<dbReference type="PANTHER" id="PTHR43808:SF1">
    <property type="entry name" value="ACETYLORNITHINE DEACETYLASE"/>
    <property type="match status" value="1"/>
</dbReference>
<dbReference type="Pfam" id="PF07687">
    <property type="entry name" value="M20_dimer"/>
    <property type="match status" value="1"/>
</dbReference>
<dbReference type="Pfam" id="PF01546">
    <property type="entry name" value="Peptidase_M20"/>
    <property type="match status" value="1"/>
</dbReference>
<dbReference type="SUPFAM" id="SSF55031">
    <property type="entry name" value="Bacterial exopeptidase dimerisation domain"/>
    <property type="match status" value="1"/>
</dbReference>
<dbReference type="SUPFAM" id="SSF53187">
    <property type="entry name" value="Zn-dependent exopeptidases"/>
    <property type="match status" value="1"/>
</dbReference>
<dbReference type="PROSITE" id="PS00758">
    <property type="entry name" value="ARGE_DAPE_CPG2_1"/>
    <property type="match status" value="1"/>
</dbReference>
<dbReference type="PROSITE" id="PS00759">
    <property type="entry name" value="ARGE_DAPE_CPG2_2"/>
    <property type="match status" value="1"/>
</dbReference>
<accession>B8D6V9</accession>
<protein>
    <recommendedName>
        <fullName evidence="1">Acetylornithine deacetylase</fullName>
        <shortName evidence="1">AO</shortName>
        <shortName evidence="1">Acetylornithinase</shortName>
        <ecNumber evidence="1">3.5.1.16</ecNumber>
    </recommendedName>
    <alternativeName>
        <fullName evidence="1">N-acetylornithinase</fullName>
        <shortName evidence="1">NAO</shortName>
    </alternativeName>
</protein>
<keyword id="KW-0028">Amino-acid biosynthesis</keyword>
<keyword id="KW-0055">Arginine biosynthesis</keyword>
<keyword id="KW-0170">Cobalt</keyword>
<keyword id="KW-0963">Cytoplasm</keyword>
<keyword id="KW-0378">Hydrolase</keyword>
<keyword id="KW-0479">Metal-binding</keyword>
<keyword id="KW-0862">Zinc</keyword>
<name>ARGE_BUCAT</name>
<organism>
    <name type="scientific">Buchnera aphidicola subsp. Acyrthosiphon pisum (strain Tuc7)</name>
    <dbReference type="NCBI Taxonomy" id="561501"/>
    <lineage>
        <taxon>Bacteria</taxon>
        <taxon>Pseudomonadati</taxon>
        <taxon>Pseudomonadota</taxon>
        <taxon>Gammaproteobacteria</taxon>
        <taxon>Enterobacterales</taxon>
        <taxon>Erwiniaceae</taxon>
        <taxon>Buchnera</taxon>
    </lineage>
</organism>
<reference key="1">
    <citation type="journal article" date="2009" name="Science">
        <title>The dynamics and time scale of ongoing genomic erosion in symbiotic bacteria.</title>
        <authorList>
            <person name="Moran N.A."/>
            <person name="McLaughlin H.J."/>
            <person name="Sorek R."/>
        </authorList>
    </citation>
    <scope>NUCLEOTIDE SEQUENCE [LARGE SCALE GENOMIC DNA]</scope>
    <source>
        <strain>Tuc7</strain>
    </source>
</reference>
<feature type="chain" id="PRO_1000163952" description="Acetylornithine deacetylase">
    <location>
        <begin position="1"/>
        <end position="381"/>
    </location>
</feature>
<feature type="active site" evidence="1">
    <location>
        <position position="81"/>
    </location>
</feature>
<feature type="active site" evidence="1">
    <location>
        <position position="143"/>
    </location>
</feature>
<feature type="binding site" evidence="1">
    <location>
        <position position="79"/>
    </location>
    <ligand>
        <name>Zn(2+)</name>
        <dbReference type="ChEBI" id="CHEBI:29105"/>
        <label>1</label>
    </ligand>
</feature>
<feature type="binding site" evidence="1">
    <location>
        <position position="111"/>
    </location>
    <ligand>
        <name>Zn(2+)</name>
        <dbReference type="ChEBI" id="CHEBI:29105"/>
        <label>1</label>
    </ligand>
</feature>
<feature type="binding site" evidence="1">
    <location>
        <position position="111"/>
    </location>
    <ligand>
        <name>Zn(2+)</name>
        <dbReference type="ChEBI" id="CHEBI:29105"/>
        <label>2</label>
    </ligand>
</feature>
<feature type="binding site" evidence="1">
    <location>
        <position position="144"/>
    </location>
    <ligand>
        <name>Zn(2+)</name>
        <dbReference type="ChEBI" id="CHEBI:29105"/>
        <label>2</label>
    </ligand>
</feature>
<feature type="binding site" evidence="1">
    <location>
        <position position="168"/>
    </location>
    <ligand>
        <name>Zn(2+)</name>
        <dbReference type="ChEBI" id="CHEBI:29105"/>
        <label>1</label>
    </ligand>
</feature>
<feature type="binding site" evidence="1">
    <location>
        <position position="354"/>
    </location>
    <ligand>
        <name>Zn(2+)</name>
        <dbReference type="ChEBI" id="CHEBI:29105"/>
        <label>2</label>
    </ligand>
</feature>
<sequence length="381" mass="43017">MIRKIPSFIEVYKSLIQIPTISSNNKLLDQSNKNFIDLLSNYFSDLNFSVKNYQIPHTDKYNMLACVGSGNGGLLLSGHSDTVDFDEKKWTKDPFKLTETNNKFYGLGAVDMKGFFALILEVISSINIKKINKPIYILATANEETDMSGAKNFIQSTIIKPDCIIIGEPTSLKLINAHKGHMSYSIKVIGDTGHSSNPDHGVNSIEIMHDVIRSLLILKKYFKEEYQHPNFSIPYPTMNLSSIHGGSAINRICPLCILNFEIRPIPGLTLTQIEIVIKEKLETIMKKWSHRIFIKKLFSSVPAYECPHNSGTIKIVEKLCQLNSAAVNYCTEAPFLQRIAPTLILGPGSIEQAHQPDEYLEHYFIQPTKNIITKLINKFCY</sequence>
<gene>
    <name evidence="1" type="primary">argE</name>
    <name type="ordered locus">BUAPTUC7_047</name>
</gene>
<comment type="function">
    <text evidence="1">Catalyzes the hydrolysis of the amide bond of N(2)-acetylated L-amino acids. Cleaves the acetyl group from N-acetyl-L-ornithine to form L-ornithine, an intermediate in L-arginine biosynthesis pathway, and a branchpoint in the synthesis of polyamines.</text>
</comment>
<comment type="catalytic activity">
    <reaction evidence="1">
        <text>N(2)-acetyl-L-ornithine + H2O = L-ornithine + acetate</text>
        <dbReference type="Rhea" id="RHEA:15941"/>
        <dbReference type="ChEBI" id="CHEBI:15377"/>
        <dbReference type="ChEBI" id="CHEBI:30089"/>
        <dbReference type="ChEBI" id="CHEBI:46911"/>
        <dbReference type="ChEBI" id="CHEBI:57805"/>
        <dbReference type="EC" id="3.5.1.16"/>
    </reaction>
</comment>
<comment type="cofactor">
    <cofactor evidence="1">
        <name>Zn(2+)</name>
        <dbReference type="ChEBI" id="CHEBI:29105"/>
    </cofactor>
    <cofactor evidence="1">
        <name>Co(2+)</name>
        <dbReference type="ChEBI" id="CHEBI:48828"/>
    </cofactor>
    <text evidence="1">Binds 2 Zn(2+) or Co(2+) ions per subunit.</text>
</comment>
<comment type="cofactor">
    <cofactor evidence="1">
        <name>glutathione</name>
        <dbReference type="ChEBI" id="CHEBI:57925"/>
    </cofactor>
</comment>
<comment type="pathway">
    <text evidence="1">Amino-acid biosynthesis; L-arginine biosynthesis; L-ornithine from N(2)-acetyl-L-ornithine (linear): step 1/1.</text>
</comment>
<comment type="subunit">
    <text evidence="1">Homodimer.</text>
</comment>
<comment type="subcellular location">
    <subcellularLocation>
        <location evidence="1">Cytoplasm</location>
    </subcellularLocation>
</comment>
<comment type="similarity">
    <text evidence="1">Belongs to the peptidase M20A family. ArgE subfamily.</text>
</comment>
<evidence type="ECO:0000255" key="1">
    <source>
        <dbReference type="HAMAP-Rule" id="MF_01108"/>
    </source>
</evidence>